<name>PIMT_SALDC</name>
<keyword id="KW-0963">Cytoplasm</keyword>
<keyword id="KW-0489">Methyltransferase</keyword>
<keyword id="KW-0949">S-adenosyl-L-methionine</keyword>
<keyword id="KW-0808">Transferase</keyword>
<feature type="chain" id="PRO_1000093272" description="Protein-L-isoaspartate O-methyltransferase">
    <location>
        <begin position="1"/>
        <end position="208"/>
    </location>
</feature>
<feature type="active site" evidence="1">
    <location>
        <position position="59"/>
    </location>
</feature>
<protein>
    <recommendedName>
        <fullName evidence="1">Protein-L-isoaspartate O-methyltransferase</fullName>
        <ecNumber evidence="1">2.1.1.77</ecNumber>
    </recommendedName>
    <alternativeName>
        <fullName evidence="1">L-isoaspartyl protein carboxyl methyltransferase</fullName>
    </alternativeName>
    <alternativeName>
        <fullName evidence="1">Protein L-isoaspartyl methyltransferase</fullName>
    </alternativeName>
    <alternativeName>
        <fullName evidence="1">Protein-beta-aspartate methyltransferase</fullName>
        <shortName evidence="1">PIMT</shortName>
    </alternativeName>
</protein>
<evidence type="ECO:0000255" key="1">
    <source>
        <dbReference type="HAMAP-Rule" id="MF_00090"/>
    </source>
</evidence>
<comment type="function">
    <text evidence="1">Catalyzes the methyl esterification of L-isoaspartyl residues in peptides and proteins that result from spontaneous decomposition of normal L-aspartyl and L-asparaginyl residues. It plays a role in the repair and/or degradation of damaged proteins.</text>
</comment>
<comment type="catalytic activity">
    <reaction evidence="1">
        <text>[protein]-L-isoaspartate + S-adenosyl-L-methionine = [protein]-L-isoaspartate alpha-methyl ester + S-adenosyl-L-homocysteine</text>
        <dbReference type="Rhea" id="RHEA:12705"/>
        <dbReference type="Rhea" id="RHEA-COMP:12143"/>
        <dbReference type="Rhea" id="RHEA-COMP:12144"/>
        <dbReference type="ChEBI" id="CHEBI:57856"/>
        <dbReference type="ChEBI" id="CHEBI:59789"/>
        <dbReference type="ChEBI" id="CHEBI:90596"/>
        <dbReference type="ChEBI" id="CHEBI:90598"/>
        <dbReference type="EC" id="2.1.1.77"/>
    </reaction>
</comment>
<comment type="subcellular location">
    <subcellularLocation>
        <location evidence="1">Cytoplasm</location>
    </subcellularLocation>
</comment>
<comment type="similarity">
    <text evidence="1">Belongs to the methyltransferase superfamily. L-isoaspartyl/D-aspartyl protein methyltransferase family.</text>
</comment>
<sequence>MVSGRVQALLEQLRAQGIRDEQVLNALAAVPREKFIDEAFEHKAWENIALPIGQGQTISQPYMVARMTELLELTPQSRVLEIGTGSGYQTAILAHLVHHVCSVERIKGLQWQARRRLKQLDLHNVSTRHGDGWQGWQARAPFDAIIVTAAPPEIPTALMAQLDEGGILVLPVGDEQQFLKRVRRRGGEFIIDTVEAVRFVPLVKGELA</sequence>
<accession>B5FTS1</accession>
<gene>
    <name evidence="1" type="primary">pcm</name>
    <name type="ordered locus">SeD_A3236</name>
</gene>
<reference key="1">
    <citation type="journal article" date="2011" name="J. Bacteriol.">
        <title>Comparative genomics of 28 Salmonella enterica isolates: evidence for CRISPR-mediated adaptive sublineage evolution.</title>
        <authorList>
            <person name="Fricke W.F."/>
            <person name="Mammel M.K."/>
            <person name="McDermott P.F."/>
            <person name="Tartera C."/>
            <person name="White D.G."/>
            <person name="Leclerc J.E."/>
            <person name="Ravel J."/>
            <person name="Cebula T.A."/>
        </authorList>
    </citation>
    <scope>NUCLEOTIDE SEQUENCE [LARGE SCALE GENOMIC DNA]</scope>
    <source>
        <strain>CT_02021853</strain>
    </source>
</reference>
<proteinExistence type="inferred from homology"/>
<dbReference type="EC" id="2.1.1.77" evidence="1"/>
<dbReference type="EMBL" id="CP001144">
    <property type="protein sequence ID" value="ACH74703.1"/>
    <property type="molecule type" value="Genomic_DNA"/>
</dbReference>
<dbReference type="RefSeq" id="WP_000253545.1">
    <property type="nucleotide sequence ID" value="NC_011205.1"/>
</dbReference>
<dbReference type="SMR" id="B5FTS1"/>
<dbReference type="KEGG" id="sed:SeD_A3236"/>
<dbReference type="HOGENOM" id="CLU_055432_2_0_6"/>
<dbReference type="Proteomes" id="UP000008322">
    <property type="component" value="Chromosome"/>
</dbReference>
<dbReference type="GO" id="GO:0005737">
    <property type="term" value="C:cytoplasm"/>
    <property type="evidence" value="ECO:0007669"/>
    <property type="project" value="UniProtKB-SubCell"/>
</dbReference>
<dbReference type="GO" id="GO:0004719">
    <property type="term" value="F:protein-L-isoaspartate (D-aspartate) O-methyltransferase activity"/>
    <property type="evidence" value="ECO:0007669"/>
    <property type="project" value="UniProtKB-UniRule"/>
</dbReference>
<dbReference type="GO" id="GO:0032259">
    <property type="term" value="P:methylation"/>
    <property type="evidence" value="ECO:0007669"/>
    <property type="project" value="UniProtKB-KW"/>
</dbReference>
<dbReference type="GO" id="GO:0036211">
    <property type="term" value="P:protein modification process"/>
    <property type="evidence" value="ECO:0007669"/>
    <property type="project" value="UniProtKB-UniRule"/>
</dbReference>
<dbReference type="GO" id="GO:0030091">
    <property type="term" value="P:protein repair"/>
    <property type="evidence" value="ECO:0007669"/>
    <property type="project" value="UniProtKB-UniRule"/>
</dbReference>
<dbReference type="CDD" id="cd02440">
    <property type="entry name" value="AdoMet_MTases"/>
    <property type="match status" value="1"/>
</dbReference>
<dbReference type="FunFam" id="3.40.50.150:FF:000010">
    <property type="entry name" value="Protein-L-isoaspartate O-methyltransferase"/>
    <property type="match status" value="1"/>
</dbReference>
<dbReference type="Gene3D" id="3.40.50.150">
    <property type="entry name" value="Vaccinia Virus protein VP39"/>
    <property type="match status" value="1"/>
</dbReference>
<dbReference type="HAMAP" id="MF_00090">
    <property type="entry name" value="PIMT"/>
    <property type="match status" value="1"/>
</dbReference>
<dbReference type="InterPro" id="IPR000682">
    <property type="entry name" value="PCMT"/>
</dbReference>
<dbReference type="InterPro" id="IPR029063">
    <property type="entry name" value="SAM-dependent_MTases_sf"/>
</dbReference>
<dbReference type="NCBIfam" id="TIGR00080">
    <property type="entry name" value="pimt"/>
    <property type="match status" value="1"/>
</dbReference>
<dbReference type="NCBIfam" id="NF001453">
    <property type="entry name" value="PRK00312.1"/>
    <property type="match status" value="1"/>
</dbReference>
<dbReference type="PANTHER" id="PTHR11579">
    <property type="entry name" value="PROTEIN-L-ISOASPARTATE O-METHYLTRANSFERASE"/>
    <property type="match status" value="1"/>
</dbReference>
<dbReference type="PANTHER" id="PTHR11579:SF0">
    <property type="entry name" value="PROTEIN-L-ISOASPARTATE(D-ASPARTATE) O-METHYLTRANSFERASE"/>
    <property type="match status" value="1"/>
</dbReference>
<dbReference type="Pfam" id="PF01135">
    <property type="entry name" value="PCMT"/>
    <property type="match status" value="1"/>
</dbReference>
<dbReference type="SUPFAM" id="SSF53335">
    <property type="entry name" value="S-adenosyl-L-methionine-dependent methyltransferases"/>
    <property type="match status" value="1"/>
</dbReference>
<dbReference type="PROSITE" id="PS01279">
    <property type="entry name" value="PCMT"/>
    <property type="match status" value="1"/>
</dbReference>
<organism>
    <name type="scientific">Salmonella dublin (strain CT_02021853)</name>
    <dbReference type="NCBI Taxonomy" id="439851"/>
    <lineage>
        <taxon>Bacteria</taxon>
        <taxon>Pseudomonadati</taxon>
        <taxon>Pseudomonadota</taxon>
        <taxon>Gammaproteobacteria</taxon>
        <taxon>Enterobacterales</taxon>
        <taxon>Enterobacteriaceae</taxon>
        <taxon>Salmonella</taxon>
    </lineage>
</organism>